<keyword id="KW-0217">Developmental protein</keyword>
<keyword id="KW-0238">DNA-binding</keyword>
<keyword id="KW-0371">Homeobox</keyword>
<keyword id="KW-0539">Nucleus</keyword>
<keyword id="KW-1185">Reference proteome</keyword>
<keyword id="KW-0804">Transcription</keyword>
<keyword id="KW-0805">Transcription regulation</keyword>
<keyword id="KW-0879">Wnt signaling pathway</keyword>
<dbReference type="EMBL" id="AB020498">
    <property type="protein sequence ID" value="BAA76867.1"/>
    <property type="molecule type" value="Genomic_DNA"/>
</dbReference>
<dbReference type="EMBL" id="Y17792">
    <property type="protein sequence ID" value="CAB56169.1"/>
    <property type="molecule type" value="mRNA"/>
</dbReference>
<dbReference type="EMBL" id="AF028715">
    <property type="protein sequence ID" value="AAF21632.1"/>
    <property type="molecule type" value="mRNA"/>
</dbReference>
<dbReference type="CCDS" id="CCDS20282.1"/>
<dbReference type="RefSeq" id="NP_036042.1">
    <property type="nucleotide sequence ID" value="NM_011912.4"/>
</dbReference>
<dbReference type="SMR" id="Q9WTP9"/>
<dbReference type="BioGRID" id="204905">
    <property type="interactions" value="6"/>
</dbReference>
<dbReference type="FunCoup" id="Q9WTP9">
    <property type="interactions" value="1031"/>
</dbReference>
<dbReference type="IntAct" id="Q9WTP9">
    <property type="interactions" value="5"/>
</dbReference>
<dbReference type="STRING" id="10090.ENSMUSP00000035976"/>
<dbReference type="iPTMnet" id="Q9WTP9"/>
<dbReference type="PhosphoSitePlus" id="Q9WTP9"/>
<dbReference type="PaxDb" id="10090-ENSMUSP00000035976"/>
<dbReference type="ProteomicsDB" id="297810"/>
<dbReference type="Antibodypedia" id="31160">
    <property type="antibodies" value="123 antibodies from 23 providers"/>
</dbReference>
<dbReference type="DNASU" id="24113"/>
<dbReference type="Ensembl" id="ENSMUST00000037807.3">
    <property type="protein sequence ID" value="ENSMUSP00000035976.2"/>
    <property type="gene ID" value="ENSMUSG00000034777.3"/>
</dbReference>
<dbReference type="GeneID" id="24113"/>
<dbReference type="KEGG" id="mmu:24113"/>
<dbReference type="UCSC" id="uc009cob.1">
    <property type="organism name" value="mouse"/>
</dbReference>
<dbReference type="AGR" id="MGI:1346018"/>
<dbReference type="CTD" id="25806"/>
<dbReference type="MGI" id="MGI:1346018">
    <property type="gene designation" value="Vax2"/>
</dbReference>
<dbReference type="VEuPathDB" id="HostDB:ENSMUSG00000034777"/>
<dbReference type="eggNOG" id="KOG0843">
    <property type="taxonomic scope" value="Eukaryota"/>
</dbReference>
<dbReference type="GeneTree" id="ENSGT00940000161043"/>
<dbReference type="HOGENOM" id="CLU_071850_1_0_1"/>
<dbReference type="InParanoid" id="Q9WTP9"/>
<dbReference type="OMA" id="GETDHCR"/>
<dbReference type="OrthoDB" id="6159439at2759"/>
<dbReference type="PhylomeDB" id="Q9WTP9"/>
<dbReference type="TreeFam" id="TF319504"/>
<dbReference type="BioGRID-ORCS" id="24113">
    <property type="hits" value="2 hits in 81 CRISPR screens"/>
</dbReference>
<dbReference type="ChiTaRS" id="Vax2">
    <property type="organism name" value="mouse"/>
</dbReference>
<dbReference type="PRO" id="PR:Q9WTP9"/>
<dbReference type="Proteomes" id="UP000000589">
    <property type="component" value="Chromosome 6"/>
</dbReference>
<dbReference type="RNAct" id="Q9WTP9">
    <property type="molecule type" value="protein"/>
</dbReference>
<dbReference type="Bgee" id="ENSMUSG00000034777">
    <property type="expression patterns" value="Expressed in optic fissure and 18 other cell types or tissues"/>
</dbReference>
<dbReference type="ExpressionAtlas" id="Q9WTP9">
    <property type="expression patterns" value="baseline and differential"/>
</dbReference>
<dbReference type="GO" id="GO:0005737">
    <property type="term" value="C:cytoplasm"/>
    <property type="evidence" value="ECO:0000314"/>
    <property type="project" value="MGI"/>
</dbReference>
<dbReference type="GO" id="GO:0005634">
    <property type="term" value="C:nucleus"/>
    <property type="evidence" value="ECO:0000314"/>
    <property type="project" value="MGI"/>
</dbReference>
<dbReference type="GO" id="GO:0031490">
    <property type="term" value="F:chromatin DNA binding"/>
    <property type="evidence" value="ECO:0000314"/>
    <property type="project" value="MGI"/>
</dbReference>
<dbReference type="GO" id="GO:0001227">
    <property type="term" value="F:DNA-binding transcription repressor activity, RNA polymerase II-specific"/>
    <property type="evidence" value="ECO:0000314"/>
    <property type="project" value="NTNU_SB"/>
</dbReference>
<dbReference type="GO" id="GO:0001162">
    <property type="term" value="F:RNA polymerase II intronic transcription regulatory region sequence-specific DNA binding"/>
    <property type="evidence" value="ECO:0000314"/>
    <property type="project" value="NTNU_SB"/>
</dbReference>
<dbReference type="GO" id="GO:0007409">
    <property type="term" value="P:axonogenesis"/>
    <property type="evidence" value="ECO:0000315"/>
    <property type="project" value="MGI"/>
</dbReference>
<dbReference type="GO" id="GO:0043010">
    <property type="term" value="P:camera-type eye development"/>
    <property type="evidence" value="ECO:0000316"/>
    <property type="project" value="MGI"/>
</dbReference>
<dbReference type="GO" id="GO:0009950">
    <property type="term" value="P:dorsal/ventral axis specification"/>
    <property type="evidence" value="ECO:0000315"/>
    <property type="project" value="MGI"/>
</dbReference>
<dbReference type="GO" id="GO:0048048">
    <property type="term" value="P:embryonic eye morphogenesis"/>
    <property type="evidence" value="ECO:0000314"/>
    <property type="project" value="MGI"/>
</dbReference>
<dbReference type="GO" id="GO:0030900">
    <property type="term" value="P:forebrain development"/>
    <property type="evidence" value="ECO:0000315"/>
    <property type="project" value="UniProtKB"/>
</dbReference>
<dbReference type="GO" id="GO:0000122">
    <property type="term" value="P:negative regulation of transcription by RNA polymerase II"/>
    <property type="evidence" value="ECO:0000314"/>
    <property type="project" value="NTNU_SB"/>
</dbReference>
<dbReference type="GO" id="GO:0060041">
    <property type="term" value="P:retina development in camera-type eye"/>
    <property type="evidence" value="ECO:0000314"/>
    <property type="project" value="MGI"/>
</dbReference>
<dbReference type="GO" id="GO:0016055">
    <property type="term" value="P:Wnt signaling pathway"/>
    <property type="evidence" value="ECO:0007669"/>
    <property type="project" value="UniProtKB-KW"/>
</dbReference>
<dbReference type="CDD" id="cd00086">
    <property type="entry name" value="homeodomain"/>
    <property type="match status" value="1"/>
</dbReference>
<dbReference type="FunFam" id="1.10.10.60:FF:000131">
    <property type="entry name" value="Ventral anterior homeobox 2"/>
    <property type="match status" value="1"/>
</dbReference>
<dbReference type="Gene3D" id="1.10.10.60">
    <property type="entry name" value="Homeodomain-like"/>
    <property type="match status" value="1"/>
</dbReference>
<dbReference type="InterPro" id="IPR050877">
    <property type="entry name" value="EMX-VAX-Noto_Homeobox_TFs"/>
</dbReference>
<dbReference type="InterPro" id="IPR001356">
    <property type="entry name" value="HD"/>
</dbReference>
<dbReference type="InterPro" id="IPR020479">
    <property type="entry name" value="HD_metazoa"/>
</dbReference>
<dbReference type="InterPro" id="IPR017970">
    <property type="entry name" value="Homeobox_CS"/>
</dbReference>
<dbReference type="InterPro" id="IPR009057">
    <property type="entry name" value="Homeodomain-like_sf"/>
</dbReference>
<dbReference type="InterPro" id="IPR000047">
    <property type="entry name" value="HTH_motif"/>
</dbReference>
<dbReference type="PANTHER" id="PTHR24339">
    <property type="entry name" value="HOMEOBOX PROTEIN EMX-RELATED"/>
    <property type="match status" value="1"/>
</dbReference>
<dbReference type="PANTHER" id="PTHR24339:SF34">
    <property type="entry name" value="VENTRAL ANTERIOR HOMEOBOX 2"/>
    <property type="match status" value="1"/>
</dbReference>
<dbReference type="Pfam" id="PF00046">
    <property type="entry name" value="Homeodomain"/>
    <property type="match status" value="1"/>
</dbReference>
<dbReference type="PRINTS" id="PR00024">
    <property type="entry name" value="HOMEOBOX"/>
</dbReference>
<dbReference type="PRINTS" id="PR00031">
    <property type="entry name" value="HTHREPRESSR"/>
</dbReference>
<dbReference type="SMART" id="SM00389">
    <property type="entry name" value="HOX"/>
    <property type="match status" value="1"/>
</dbReference>
<dbReference type="SUPFAM" id="SSF46689">
    <property type="entry name" value="Homeodomain-like"/>
    <property type="match status" value="1"/>
</dbReference>
<dbReference type="PROSITE" id="PS00027">
    <property type="entry name" value="HOMEOBOX_1"/>
    <property type="match status" value="1"/>
</dbReference>
<dbReference type="PROSITE" id="PS50071">
    <property type="entry name" value="HOMEOBOX_2"/>
    <property type="match status" value="1"/>
</dbReference>
<gene>
    <name type="primary">Vax2</name>
    <name type="synonym">Vex</name>
</gene>
<comment type="function">
    <text evidence="3 5 6 7">Transcription factor that may function in dorsoventral specification of the forebrain. Regulates the expression of Wnt signaling antagonists including the expression of a truncated TCF7L2 isoform that cannot bind CTNNB1 and acts therefore as a potent dominant-negative Wnt antagonist. Plays a crucial role in eye development and, in particular, in the specification of the ventral optic vesicle. May be a regulator of axial polarization in the retina.</text>
</comment>
<comment type="subcellular location">
    <subcellularLocation>
        <location evidence="8">Nucleus</location>
    </subcellularLocation>
</comment>
<comment type="tissue specificity">
    <text evidence="3 5">Expressed in the developing and mature retina.</text>
</comment>
<comment type="developmental stage">
    <text evidence="3 4">At 9.5 dpc, expressed solely in the ventral halves of the optic stalks and vesicles without proximo-distal restriction. Expression in the optic stalk diminishes after 11.5 dpc and becomes restricted to the inner layer of optic cup in its ventral half. Expression persists in the ventral halves of all neural retina layers (inner and outer nuclear layer) at 14.5 dpc and 16.5 dpc, and the ganglion cell layer, inner nuclear layer and photoreceptor layer in the adult.</text>
</comment>
<comment type="similarity">
    <text evidence="8">Belongs to the EMX homeobox family.</text>
</comment>
<protein>
    <recommendedName>
        <fullName>Ventral anterior homeobox 2</fullName>
    </recommendedName>
    <alternativeName>
        <fullName>Ventral retina homeodomain protein</fullName>
    </alternativeName>
</protein>
<accession>Q9WTP9</accession>
<name>VAX2_MOUSE</name>
<sequence>MGDGGAERDRGPKRREEPGGRSGRHGEHRGAEDLRADTGSASPREIAGTSASSPAGSRESGGDSDGQQALGETDHCRRILVRDAKGTIREIVLPKGLDLDRPKRTRTSFTAEQLYRLEMEFQRCQYVVGRERTELARQLNLSETQVKVWFQNRRTKQKKDQSRDLEKRASSSASEAFATSNVLRLLEQGRLLSVPRAPSLLALTPGLPGLPASHRGTSLVDPRNSSPRLNPMPSASASSPLPPPLPAICFSSAPLLDLPAGYKLGSSAFEPYSRLEQQKVGSPGQSDKKADI</sequence>
<feature type="chain" id="PRO_0000049352" description="Ventral anterior homeobox 2">
    <location>
        <begin position="1"/>
        <end position="292"/>
    </location>
</feature>
<feature type="DNA-binding region" description="Homeobox" evidence="1">
    <location>
        <begin position="102"/>
        <end position="161"/>
    </location>
</feature>
<feature type="region of interest" description="Disordered" evidence="2">
    <location>
        <begin position="1"/>
        <end position="74"/>
    </location>
</feature>
<feature type="region of interest" description="Disordered" evidence="2">
    <location>
        <begin position="207"/>
        <end position="242"/>
    </location>
</feature>
<feature type="compositionally biased region" description="Basic and acidic residues" evidence="2">
    <location>
        <begin position="1"/>
        <end position="36"/>
    </location>
</feature>
<reference key="1">
    <citation type="journal article" date="1999" name="Genes Cells">
        <title>Expression of the Vax family homeobox genes suggests multiple roles in eye development.</title>
        <authorList>
            <person name="Ohsaki K."/>
            <person name="Morimitsu T."/>
            <person name="Ishida Y."/>
            <person name="Kominami R."/>
            <person name="Takahashi N."/>
        </authorList>
    </citation>
    <scope>NUCLEOTIDE SEQUENCE [GENOMIC DNA]</scope>
    <scope>FUNCTION</scope>
    <scope>TISSUE SPECIFICITY</scope>
    <scope>DEVELOPMENTAL STAGE</scope>
    <source>
        <strain>BALB/cJ</strain>
    </source>
</reference>
<reference key="2">
    <citation type="journal article" date="1999" name="Proc. Natl. Acad. Sci. U.S.A.">
        <title>A homeobox gene, vax2, controls the patterning of the eye dorsoventral axis.</title>
        <authorList>
            <person name="Barbieri A.M."/>
            <person name="Lupo G."/>
            <person name="Bulfone A."/>
            <person name="Andreazzoli M."/>
            <person name="Mariani M."/>
            <person name="Fougerousse F."/>
            <person name="Consalez G.G."/>
            <person name="Borsani G."/>
            <person name="Beckmann J.S."/>
            <person name="Barsacchi G."/>
            <person name="Ballabio A."/>
            <person name="Banfi S."/>
        </authorList>
    </citation>
    <scope>NUCLEOTIDE SEQUENCE [MRNA]</scope>
    <scope>DEVELOPMENTAL STAGE</scope>
    <source>
        <tissue>Embryo</tissue>
    </source>
</reference>
<reference key="3">
    <citation type="journal article" date="1999" name="Neuron">
        <title>Misexpression of the Emx-related homeobox genes cVax and mVax2 ventralizes the retina and perturbs the retinotectal map.</title>
        <authorList>
            <person name="Schulte D."/>
            <person name="Furukawa T."/>
            <person name="Peters M.A."/>
            <person name="Kozak C.A."/>
            <person name="Cepko C.L."/>
        </authorList>
    </citation>
    <scope>NUCLEOTIDE SEQUENCE [MRNA]</scope>
    <scope>FUNCTION</scope>
    <scope>TISSUE SPECIFICITY</scope>
    <source>
        <tissue>Retina</tissue>
    </source>
</reference>
<reference key="4">
    <citation type="journal article" date="2002" name="Development">
        <title>The homeodomain protein Vax2 patterns the dorsoventral and nasotemporal axes of the eye.</title>
        <authorList>
            <person name="Mui S.H."/>
            <person name="Hindges R."/>
            <person name="O'Leary D.D."/>
            <person name="Lemke G."/>
            <person name="Bertuzzi S."/>
        </authorList>
    </citation>
    <scope>FUNCTION IN EYE DEVELOPMENT</scope>
</reference>
<reference key="5">
    <citation type="journal article" date="2011" name="Genes Dev.">
        <title>A novel mechanism for the transcriptional regulation of Wnt signaling in development.</title>
        <authorList>
            <person name="Vacik T."/>
            <person name="Stubbs J.L."/>
            <person name="Lemke G."/>
        </authorList>
    </citation>
    <scope>FUNCTION</scope>
</reference>
<evidence type="ECO:0000255" key="1">
    <source>
        <dbReference type="PROSITE-ProRule" id="PRU00108"/>
    </source>
</evidence>
<evidence type="ECO:0000256" key="2">
    <source>
        <dbReference type="SAM" id="MobiDB-lite"/>
    </source>
</evidence>
<evidence type="ECO:0000269" key="3">
    <source>
    </source>
</evidence>
<evidence type="ECO:0000269" key="4">
    <source>
    </source>
</evidence>
<evidence type="ECO:0000269" key="5">
    <source>
    </source>
</evidence>
<evidence type="ECO:0000269" key="6">
    <source>
    </source>
</evidence>
<evidence type="ECO:0000269" key="7">
    <source>
    </source>
</evidence>
<evidence type="ECO:0000305" key="8"/>
<organism>
    <name type="scientific">Mus musculus</name>
    <name type="common">Mouse</name>
    <dbReference type="NCBI Taxonomy" id="10090"/>
    <lineage>
        <taxon>Eukaryota</taxon>
        <taxon>Metazoa</taxon>
        <taxon>Chordata</taxon>
        <taxon>Craniata</taxon>
        <taxon>Vertebrata</taxon>
        <taxon>Euteleostomi</taxon>
        <taxon>Mammalia</taxon>
        <taxon>Eutheria</taxon>
        <taxon>Euarchontoglires</taxon>
        <taxon>Glires</taxon>
        <taxon>Rodentia</taxon>
        <taxon>Myomorpha</taxon>
        <taxon>Muroidea</taxon>
        <taxon>Muridae</taxon>
        <taxon>Murinae</taxon>
        <taxon>Mus</taxon>
        <taxon>Mus</taxon>
    </lineage>
</organism>
<proteinExistence type="evidence at protein level"/>